<evidence type="ECO:0000255" key="1">
    <source>
        <dbReference type="HAMAP-Rule" id="MF_00022"/>
    </source>
</evidence>
<accession>Q4FM56</accession>
<dbReference type="EC" id="6.1.1.17" evidence="1"/>
<dbReference type="EMBL" id="CP000084">
    <property type="protein sequence ID" value="AAZ21733.1"/>
    <property type="molecule type" value="Genomic_DNA"/>
</dbReference>
<dbReference type="RefSeq" id="WP_011282039.1">
    <property type="nucleotide sequence ID" value="NC_007205.1"/>
</dbReference>
<dbReference type="SMR" id="Q4FM56"/>
<dbReference type="STRING" id="335992.SAR11_0920"/>
<dbReference type="GeneID" id="66295413"/>
<dbReference type="KEGG" id="pub:SAR11_0920"/>
<dbReference type="eggNOG" id="COG0008">
    <property type="taxonomic scope" value="Bacteria"/>
</dbReference>
<dbReference type="HOGENOM" id="CLU_015768_6_0_5"/>
<dbReference type="OrthoDB" id="9807503at2"/>
<dbReference type="Proteomes" id="UP000002528">
    <property type="component" value="Chromosome"/>
</dbReference>
<dbReference type="GO" id="GO:0005829">
    <property type="term" value="C:cytosol"/>
    <property type="evidence" value="ECO:0007669"/>
    <property type="project" value="TreeGrafter"/>
</dbReference>
<dbReference type="GO" id="GO:0005524">
    <property type="term" value="F:ATP binding"/>
    <property type="evidence" value="ECO:0007669"/>
    <property type="project" value="UniProtKB-UniRule"/>
</dbReference>
<dbReference type="GO" id="GO:0004818">
    <property type="term" value="F:glutamate-tRNA ligase activity"/>
    <property type="evidence" value="ECO:0007669"/>
    <property type="project" value="UniProtKB-UniRule"/>
</dbReference>
<dbReference type="GO" id="GO:0000049">
    <property type="term" value="F:tRNA binding"/>
    <property type="evidence" value="ECO:0007669"/>
    <property type="project" value="InterPro"/>
</dbReference>
<dbReference type="GO" id="GO:0008270">
    <property type="term" value="F:zinc ion binding"/>
    <property type="evidence" value="ECO:0007669"/>
    <property type="project" value="UniProtKB-UniRule"/>
</dbReference>
<dbReference type="GO" id="GO:0006424">
    <property type="term" value="P:glutamyl-tRNA aminoacylation"/>
    <property type="evidence" value="ECO:0007669"/>
    <property type="project" value="UniProtKB-UniRule"/>
</dbReference>
<dbReference type="CDD" id="cd00808">
    <property type="entry name" value="GluRS_core"/>
    <property type="match status" value="1"/>
</dbReference>
<dbReference type="FunFam" id="3.40.50.620:FF:000007">
    <property type="entry name" value="Glutamate--tRNA ligase"/>
    <property type="match status" value="1"/>
</dbReference>
<dbReference type="Gene3D" id="1.10.10.350">
    <property type="match status" value="1"/>
</dbReference>
<dbReference type="Gene3D" id="3.40.50.620">
    <property type="entry name" value="HUPs"/>
    <property type="match status" value="1"/>
</dbReference>
<dbReference type="HAMAP" id="MF_00022">
    <property type="entry name" value="Glu_tRNA_synth_type1"/>
    <property type="match status" value="1"/>
</dbReference>
<dbReference type="InterPro" id="IPR045462">
    <property type="entry name" value="aa-tRNA-synth_I_cd-bd"/>
</dbReference>
<dbReference type="InterPro" id="IPR020751">
    <property type="entry name" value="aa-tRNA-synth_I_codon-bd_sub2"/>
</dbReference>
<dbReference type="InterPro" id="IPR001412">
    <property type="entry name" value="aa-tRNA-synth_I_CS"/>
</dbReference>
<dbReference type="InterPro" id="IPR008925">
    <property type="entry name" value="aa_tRNA-synth_I_cd-bd_sf"/>
</dbReference>
<dbReference type="InterPro" id="IPR004527">
    <property type="entry name" value="Glu-tRNA-ligase_bac/mito"/>
</dbReference>
<dbReference type="InterPro" id="IPR000924">
    <property type="entry name" value="Glu/Gln-tRNA-synth"/>
</dbReference>
<dbReference type="InterPro" id="IPR020058">
    <property type="entry name" value="Glu/Gln-tRNA-synth_Ib_cat-dom"/>
</dbReference>
<dbReference type="InterPro" id="IPR049940">
    <property type="entry name" value="GluQ/Sye"/>
</dbReference>
<dbReference type="InterPro" id="IPR033910">
    <property type="entry name" value="GluRS_core"/>
</dbReference>
<dbReference type="InterPro" id="IPR014729">
    <property type="entry name" value="Rossmann-like_a/b/a_fold"/>
</dbReference>
<dbReference type="NCBIfam" id="TIGR00464">
    <property type="entry name" value="gltX_bact"/>
    <property type="match status" value="1"/>
</dbReference>
<dbReference type="PANTHER" id="PTHR43311">
    <property type="entry name" value="GLUTAMATE--TRNA LIGASE"/>
    <property type="match status" value="1"/>
</dbReference>
<dbReference type="PANTHER" id="PTHR43311:SF2">
    <property type="entry name" value="GLUTAMATE--TRNA LIGASE, MITOCHONDRIAL-RELATED"/>
    <property type="match status" value="1"/>
</dbReference>
<dbReference type="Pfam" id="PF19269">
    <property type="entry name" value="Anticodon_2"/>
    <property type="match status" value="1"/>
</dbReference>
<dbReference type="Pfam" id="PF00749">
    <property type="entry name" value="tRNA-synt_1c"/>
    <property type="match status" value="1"/>
</dbReference>
<dbReference type="PRINTS" id="PR00987">
    <property type="entry name" value="TRNASYNTHGLU"/>
</dbReference>
<dbReference type="SUPFAM" id="SSF48163">
    <property type="entry name" value="An anticodon-binding domain of class I aminoacyl-tRNA synthetases"/>
    <property type="match status" value="1"/>
</dbReference>
<dbReference type="SUPFAM" id="SSF52374">
    <property type="entry name" value="Nucleotidylyl transferase"/>
    <property type="match status" value="1"/>
</dbReference>
<dbReference type="PROSITE" id="PS00178">
    <property type="entry name" value="AA_TRNA_LIGASE_I"/>
    <property type="match status" value="1"/>
</dbReference>
<comment type="function">
    <text evidence="1">Catalyzes the attachment of glutamate to tRNA(Glu) in a two-step reaction: glutamate is first activated by ATP to form Glu-AMP and then transferred to the acceptor end of tRNA(Glu).</text>
</comment>
<comment type="catalytic activity">
    <reaction evidence="1">
        <text>tRNA(Glu) + L-glutamate + ATP = L-glutamyl-tRNA(Glu) + AMP + diphosphate</text>
        <dbReference type="Rhea" id="RHEA:23540"/>
        <dbReference type="Rhea" id="RHEA-COMP:9663"/>
        <dbReference type="Rhea" id="RHEA-COMP:9680"/>
        <dbReference type="ChEBI" id="CHEBI:29985"/>
        <dbReference type="ChEBI" id="CHEBI:30616"/>
        <dbReference type="ChEBI" id="CHEBI:33019"/>
        <dbReference type="ChEBI" id="CHEBI:78442"/>
        <dbReference type="ChEBI" id="CHEBI:78520"/>
        <dbReference type="ChEBI" id="CHEBI:456215"/>
        <dbReference type="EC" id="6.1.1.17"/>
    </reaction>
</comment>
<comment type="cofactor">
    <cofactor evidence="1">
        <name>Zn(2+)</name>
        <dbReference type="ChEBI" id="CHEBI:29105"/>
    </cofactor>
    <text evidence="1">Binds 1 zinc ion per subunit.</text>
</comment>
<comment type="subunit">
    <text evidence="1">Monomer.</text>
</comment>
<comment type="subcellular location">
    <subcellularLocation>
        <location evidence="1">Cytoplasm</location>
    </subcellularLocation>
</comment>
<comment type="similarity">
    <text evidence="1">Belongs to the class-I aminoacyl-tRNA synthetase family. Glutamate--tRNA ligase type 1 subfamily.</text>
</comment>
<sequence length="466" mass="53866">MSKVATRFAPSPTGALHIGGVRTALFNWLYSKNKNGTFHLRIEDTDKERSKDEHKIQIIKSLKWIGIDHDGDEYIQSTKINDHVNVANELLKNGHAYKCYCSSAEIEEQKKRARQKKLPYVYNRKCRDLQETNAPTIIKPVIRFKIKIEGTSVLKDLVQGDVEIENTTIEDFIILRNDGTPTYNLSATVDDHQMKMTHIIRGDDHKINTFKQMQIYLAMSWDLPNFAHIPLIHTIEGKKLSKRDNASTLDDYSKIGIMPDALRNYLLRLGWSYQDKEIFTLKESIELFNLEGIGKSPSKLDMSRILSLNEHYIKTINENELYDHLVKYCEIYKEKIKPEKETKIKPSLIFLKNKAKTLEDIFNNAKYIIFDDVKFEDKDLELIDDKAKSIIKEFKEKLISINTLNKETLEPIVNDLIKKYETNFKGVGQPLRIALTGSKFGPGLYDIIISLGNEEVERRLGNKIII</sequence>
<name>SYE_PELUB</name>
<reference key="1">
    <citation type="journal article" date="2005" name="Science">
        <title>Genome streamlining in a cosmopolitan oceanic bacterium.</title>
        <authorList>
            <person name="Giovannoni S.J."/>
            <person name="Tripp H.J."/>
            <person name="Givan S."/>
            <person name="Podar M."/>
            <person name="Vergin K.L."/>
            <person name="Baptista D."/>
            <person name="Bibbs L."/>
            <person name="Eads J."/>
            <person name="Richardson T.H."/>
            <person name="Noordewier M."/>
            <person name="Rappe M.S."/>
            <person name="Short J.M."/>
            <person name="Carrington J.C."/>
            <person name="Mathur E.J."/>
        </authorList>
    </citation>
    <scope>NUCLEOTIDE SEQUENCE [LARGE SCALE GENOMIC DNA]</scope>
    <source>
        <strain>HTCC1062</strain>
    </source>
</reference>
<organism>
    <name type="scientific">Pelagibacter ubique (strain HTCC1062)</name>
    <dbReference type="NCBI Taxonomy" id="335992"/>
    <lineage>
        <taxon>Bacteria</taxon>
        <taxon>Pseudomonadati</taxon>
        <taxon>Pseudomonadota</taxon>
        <taxon>Alphaproteobacteria</taxon>
        <taxon>Candidatus Pelagibacterales</taxon>
        <taxon>Candidatus Pelagibacteraceae</taxon>
        <taxon>Candidatus Pelagibacter</taxon>
    </lineage>
</organism>
<gene>
    <name evidence="1" type="primary">gltX</name>
    <name type="ordered locus">SAR11_0920</name>
</gene>
<keyword id="KW-0030">Aminoacyl-tRNA synthetase</keyword>
<keyword id="KW-0067">ATP-binding</keyword>
<keyword id="KW-0963">Cytoplasm</keyword>
<keyword id="KW-0436">Ligase</keyword>
<keyword id="KW-0479">Metal-binding</keyword>
<keyword id="KW-0547">Nucleotide-binding</keyword>
<keyword id="KW-0648">Protein biosynthesis</keyword>
<keyword id="KW-1185">Reference proteome</keyword>
<keyword id="KW-0862">Zinc</keyword>
<proteinExistence type="inferred from homology"/>
<feature type="chain" id="PRO_0000237382" description="Glutamate--tRNA ligase">
    <location>
        <begin position="1"/>
        <end position="466"/>
    </location>
</feature>
<feature type="short sequence motif" description="'HIGH' region" evidence="1">
    <location>
        <begin position="10"/>
        <end position="20"/>
    </location>
</feature>
<feature type="short sequence motif" description="'KMSKS' region" evidence="1">
    <location>
        <begin position="239"/>
        <end position="243"/>
    </location>
</feature>
<feature type="binding site" evidence="1">
    <location>
        <position position="99"/>
    </location>
    <ligand>
        <name>Zn(2+)</name>
        <dbReference type="ChEBI" id="CHEBI:29105"/>
    </ligand>
</feature>
<feature type="binding site" evidence="1">
    <location>
        <position position="101"/>
    </location>
    <ligand>
        <name>Zn(2+)</name>
        <dbReference type="ChEBI" id="CHEBI:29105"/>
    </ligand>
</feature>
<feature type="binding site" evidence="1">
    <location>
        <position position="126"/>
    </location>
    <ligand>
        <name>Zn(2+)</name>
        <dbReference type="ChEBI" id="CHEBI:29105"/>
    </ligand>
</feature>
<feature type="binding site" evidence="1">
    <location>
        <position position="128"/>
    </location>
    <ligand>
        <name>Zn(2+)</name>
        <dbReference type="ChEBI" id="CHEBI:29105"/>
    </ligand>
</feature>
<feature type="binding site" evidence="1">
    <location>
        <position position="242"/>
    </location>
    <ligand>
        <name>ATP</name>
        <dbReference type="ChEBI" id="CHEBI:30616"/>
    </ligand>
</feature>
<protein>
    <recommendedName>
        <fullName evidence="1">Glutamate--tRNA ligase</fullName>
        <ecNumber evidence="1">6.1.1.17</ecNumber>
    </recommendedName>
    <alternativeName>
        <fullName evidence="1">Glutamyl-tRNA synthetase</fullName>
        <shortName evidence="1">GluRS</shortName>
    </alternativeName>
</protein>